<keyword id="KW-0687">Ribonucleoprotein</keyword>
<keyword id="KW-0689">Ribosomal protein</keyword>
<feature type="propeptide" id="PRO_0000459850" evidence="1">
    <location>
        <begin position="1"/>
        <end position="9"/>
    </location>
</feature>
<feature type="chain" id="PRO_1000146507" description="Large ribosomal subunit protein bL27">
    <location>
        <begin position="10"/>
        <end position="96"/>
    </location>
</feature>
<feature type="region of interest" description="Disordered" evidence="3">
    <location>
        <begin position="14"/>
        <end position="36"/>
    </location>
</feature>
<protein>
    <recommendedName>
        <fullName evidence="2">Large ribosomal subunit protein bL27</fullName>
    </recommendedName>
    <alternativeName>
        <fullName evidence="4">50S ribosomal protein L27</fullName>
    </alternativeName>
</protein>
<sequence length="96" mass="10491">MLRLDLQFFASKKGVGSTKNGRDSQSKRLGAKRADGQTVSGGSILYRQRGTKIYPGVNVGRGGDDTLYAKVDGVVRFERLGRDRKQVSVYPVAQEA</sequence>
<evidence type="ECO:0000250" key="1">
    <source>
        <dbReference type="UniProtKB" id="Q2FXT0"/>
    </source>
</evidence>
<evidence type="ECO:0000255" key="2">
    <source>
        <dbReference type="HAMAP-Rule" id="MF_00539"/>
    </source>
</evidence>
<evidence type="ECO:0000256" key="3">
    <source>
        <dbReference type="SAM" id="MobiDB-lite"/>
    </source>
</evidence>
<evidence type="ECO:0000305" key="4"/>
<gene>
    <name evidence="2" type="primary">rpmA</name>
    <name type="ordered locus">BCA_4554</name>
</gene>
<proteinExistence type="inferred from homology"/>
<comment type="PTM">
    <text evidence="1">The N-terminus is cleaved by ribosomal processing cysteine protease Prp.</text>
</comment>
<comment type="similarity">
    <text evidence="2">Belongs to the bacterial ribosomal protein bL27 family.</text>
</comment>
<dbReference type="EMBL" id="CP001407">
    <property type="protein sequence ID" value="ACO27229.1"/>
    <property type="molecule type" value="Genomic_DNA"/>
</dbReference>
<dbReference type="RefSeq" id="WP_000944957.1">
    <property type="nucleotide sequence ID" value="NZ_CP009318.1"/>
</dbReference>
<dbReference type="SMR" id="C1ETN9"/>
<dbReference type="GeneID" id="92884982"/>
<dbReference type="KEGG" id="bcx:BCA_4554"/>
<dbReference type="PATRIC" id="fig|572264.18.peg.4503"/>
<dbReference type="Proteomes" id="UP000002210">
    <property type="component" value="Chromosome"/>
</dbReference>
<dbReference type="GO" id="GO:0022625">
    <property type="term" value="C:cytosolic large ribosomal subunit"/>
    <property type="evidence" value="ECO:0007669"/>
    <property type="project" value="TreeGrafter"/>
</dbReference>
<dbReference type="GO" id="GO:0003735">
    <property type="term" value="F:structural constituent of ribosome"/>
    <property type="evidence" value="ECO:0007669"/>
    <property type="project" value="InterPro"/>
</dbReference>
<dbReference type="GO" id="GO:0006412">
    <property type="term" value="P:translation"/>
    <property type="evidence" value="ECO:0007669"/>
    <property type="project" value="UniProtKB-UniRule"/>
</dbReference>
<dbReference type="FunFam" id="2.40.50.100:FF:000004">
    <property type="entry name" value="50S ribosomal protein L27"/>
    <property type="match status" value="1"/>
</dbReference>
<dbReference type="Gene3D" id="2.40.50.100">
    <property type="match status" value="1"/>
</dbReference>
<dbReference type="HAMAP" id="MF_00539">
    <property type="entry name" value="Ribosomal_bL27"/>
    <property type="match status" value="1"/>
</dbReference>
<dbReference type="InterPro" id="IPR001684">
    <property type="entry name" value="Ribosomal_bL27"/>
</dbReference>
<dbReference type="InterPro" id="IPR018261">
    <property type="entry name" value="Ribosomal_bL27_CS"/>
</dbReference>
<dbReference type="NCBIfam" id="TIGR00062">
    <property type="entry name" value="L27"/>
    <property type="match status" value="1"/>
</dbReference>
<dbReference type="PANTHER" id="PTHR15893:SF0">
    <property type="entry name" value="LARGE RIBOSOMAL SUBUNIT PROTEIN BL27M"/>
    <property type="match status" value="1"/>
</dbReference>
<dbReference type="PANTHER" id="PTHR15893">
    <property type="entry name" value="RIBOSOMAL PROTEIN L27"/>
    <property type="match status" value="1"/>
</dbReference>
<dbReference type="Pfam" id="PF01016">
    <property type="entry name" value="Ribosomal_L27"/>
    <property type="match status" value="1"/>
</dbReference>
<dbReference type="PRINTS" id="PR00063">
    <property type="entry name" value="RIBOSOMALL27"/>
</dbReference>
<dbReference type="SUPFAM" id="SSF110324">
    <property type="entry name" value="Ribosomal L27 protein-like"/>
    <property type="match status" value="1"/>
</dbReference>
<dbReference type="PROSITE" id="PS00831">
    <property type="entry name" value="RIBOSOMAL_L27"/>
    <property type="match status" value="1"/>
</dbReference>
<organism>
    <name type="scientific">Bacillus cereus (strain 03BB102)</name>
    <dbReference type="NCBI Taxonomy" id="572264"/>
    <lineage>
        <taxon>Bacteria</taxon>
        <taxon>Bacillati</taxon>
        <taxon>Bacillota</taxon>
        <taxon>Bacilli</taxon>
        <taxon>Bacillales</taxon>
        <taxon>Bacillaceae</taxon>
        <taxon>Bacillus</taxon>
        <taxon>Bacillus cereus group</taxon>
    </lineage>
</organism>
<name>RL27_BACC3</name>
<accession>C1ETN9</accession>
<reference key="1">
    <citation type="submission" date="2009-02" db="EMBL/GenBank/DDBJ databases">
        <title>Genome sequence of Bacillus cereus 03BB102.</title>
        <authorList>
            <person name="Dodson R.J."/>
            <person name="Jackson P."/>
            <person name="Munk A.C."/>
            <person name="Brettin T."/>
            <person name="Bruce D."/>
            <person name="Detter C."/>
            <person name="Tapia R."/>
            <person name="Han C."/>
            <person name="Sutton G."/>
            <person name="Sims D."/>
        </authorList>
    </citation>
    <scope>NUCLEOTIDE SEQUENCE [LARGE SCALE GENOMIC DNA]</scope>
    <source>
        <strain>03BB102</strain>
    </source>
</reference>